<sequence>MSIVNLSSYHFATIEDTAAWRPFVTERCNALGLKGTILLAPEGINLFVAGTRENTDAFIHYIRHDALFEGKFVDLQFKESLSDKQPFTRMLVKLKREIITMKKPAIRPELGRAPFVDAPTLKHWLDRGHDDQGRPVVMLDTRNAFEVDVGTFDNALDYRITKFSEFPEVIEQNRADLEGKTVVSFCTGGIRCEKAAIHMKEVGIENVYQLEGGILKYFEEVGGAHYHGDCFVFDYRTALNPQLEPSKTTQCFGCRAVVPPQAQESPLYVAGKTCPECHPDSKAARAA</sequence>
<accession>B2T256</accession>
<keyword id="KW-0560">Oxidoreductase</keyword>
<keyword id="KW-0819">tRNA processing</keyword>
<proteinExistence type="inferred from homology"/>
<comment type="function">
    <text evidence="1">Catalyzes oxygen-dependent 5-hydroxyuridine (ho5U) modification at position 34 in tRNAs.</text>
</comment>
<comment type="catalytic activity">
    <reaction evidence="1">
        <text>uridine(34) in tRNA + AH2 + O2 = 5-hydroxyuridine(34) in tRNA + A + H2O</text>
        <dbReference type="Rhea" id="RHEA:64224"/>
        <dbReference type="Rhea" id="RHEA-COMP:11727"/>
        <dbReference type="Rhea" id="RHEA-COMP:13381"/>
        <dbReference type="ChEBI" id="CHEBI:13193"/>
        <dbReference type="ChEBI" id="CHEBI:15377"/>
        <dbReference type="ChEBI" id="CHEBI:15379"/>
        <dbReference type="ChEBI" id="CHEBI:17499"/>
        <dbReference type="ChEBI" id="CHEBI:65315"/>
        <dbReference type="ChEBI" id="CHEBI:136877"/>
    </reaction>
</comment>
<comment type="similarity">
    <text evidence="1">Belongs to the TrhO family.</text>
</comment>
<gene>
    <name evidence="1" type="primary">trhO</name>
    <name type="ordered locus">Bphyt_1252</name>
</gene>
<reference key="1">
    <citation type="journal article" date="2011" name="J. Bacteriol.">
        <title>Complete genome sequence of the plant growth-promoting endophyte Burkholderia phytofirmans strain PsJN.</title>
        <authorList>
            <person name="Weilharter A."/>
            <person name="Mitter B."/>
            <person name="Shin M.V."/>
            <person name="Chain P.S."/>
            <person name="Nowak J."/>
            <person name="Sessitsch A."/>
        </authorList>
    </citation>
    <scope>NUCLEOTIDE SEQUENCE [LARGE SCALE GENOMIC DNA]</scope>
    <source>
        <strain>DSM 17436 / LMG 22146 / PsJN</strain>
    </source>
</reference>
<name>TRHO_PARPJ</name>
<evidence type="ECO:0000255" key="1">
    <source>
        <dbReference type="HAMAP-Rule" id="MF_00469"/>
    </source>
</evidence>
<feature type="chain" id="PRO_1000200347" description="tRNA uridine(34) hydroxylase">
    <location>
        <begin position="1"/>
        <end position="287"/>
    </location>
</feature>
<feature type="domain" description="Rhodanese" evidence="1">
    <location>
        <begin position="132"/>
        <end position="226"/>
    </location>
</feature>
<feature type="active site" description="Cysteine persulfide intermediate" evidence="1">
    <location>
        <position position="186"/>
    </location>
</feature>
<dbReference type="EC" id="1.14.-.-" evidence="1"/>
<dbReference type="EMBL" id="CP001052">
    <property type="protein sequence ID" value="ACD15667.1"/>
    <property type="molecule type" value="Genomic_DNA"/>
</dbReference>
<dbReference type="RefSeq" id="WP_012432287.1">
    <property type="nucleotide sequence ID" value="NC_010681.1"/>
</dbReference>
<dbReference type="SMR" id="B2T256"/>
<dbReference type="STRING" id="398527.Bphyt_1252"/>
<dbReference type="KEGG" id="bpy:Bphyt_1252"/>
<dbReference type="eggNOG" id="COG1054">
    <property type="taxonomic scope" value="Bacteria"/>
</dbReference>
<dbReference type="HOGENOM" id="CLU_038878_0_1_4"/>
<dbReference type="OrthoDB" id="9778326at2"/>
<dbReference type="Proteomes" id="UP000001739">
    <property type="component" value="Chromosome 1"/>
</dbReference>
<dbReference type="GO" id="GO:0016705">
    <property type="term" value="F:oxidoreductase activity, acting on paired donors, with incorporation or reduction of molecular oxygen"/>
    <property type="evidence" value="ECO:0007669"/>
    <property type="project" value="UniProtKB-UniRule"/>
</dbReference>
<dbReference type="GO" id="GO:0006400">
    <property type="term" value="P:tRNA modification"/>
    <property type="evidence" value="ECO:0007669"/>
    <property type="project" value="UniProtKB-UniRule"/>
</dbReference>
<dbReference type="CDD" id="cd01518">
    <property type="entry name" value="RHOD_YceA"/>
    <property type="match status" value="1"/>
</dbReference>
<dbReference type="Gene3D" id="3.30.70.100">
    <property type="match status" value="1"/>
</dbReference>
<dbReference type="Gene3D" id="3.40.250.10">
    <property type="entry name" value="Rhodanese-like domain"/>
    <property type="match status" value="1"/>
</dbReference>
<dbReference type="HAMAP" id="MF_00469">
    <property type="entry name" value="TrhO"/>
    <property type="match status" value="1"/>
</dbReference>
<dbReference type="InterPro" id="IPR001763">
    <property type="entry name" value="Rhodanese-like_dom"/>
</dbReference>
<dbReference type="InterPro" id="IPR036873">
    <property type="entry name" value="Rhodanese-like_dom_sf"/>
</dbReference>
<dbReference type="InterPro" id="IPR020936">
    <property type="entry name" value="TrhO"/>
</dbReference>
<dbReference type="InterPro" id="IPR040503">
    <property type="entry name" value="TRHO_N"/>
</dbReference>
<dbReference type="NCBIfam" id="NF003703">
    <property type="entry name" value="PRK05320.1"/>
    <property type="match status" value="1"/>
</dbReference>
<dbReference type="PANTHER" id="PTHR43268:SF3">
    <property type="entry name" value="RHODANESE-LIKE DOMAIN-CONTAINING PROTEIN 7-RELATED"/>
    <property type="match status" value="1"/>
</dbReference>
<dbReference type="PANTHER" id="PTHR43268">
    <property type="entry name" value="THIOSULFATE SULFURTRANSFERASE/RHODANESE-LIKE DOMAIN-CONTAINING PROTEIN 2"/>
    <property type="match status" value="1"/>
</dbReference>
<dbReference type="Pfam" id="PF00581">
    <property type="entry name" value="Rhodanese"/>
    <property type="match status" value="1"/>
</dbReference>
<dbReference type="Pfam" id="PF17773">
    <property type="entry name" value="UPF0176_N"/>
    <property type="match status" value="1"/>
</dbReference>
<dbReference type="SMART" id="SM00450">
    <property type="entry name" value="RHOD"/>
    <property type="match status" value="1"/>
</dbReference>
<dbReference type="SUPFAM" id="SSF52821">
    <property type="entry name" value="Rhodanese/Cell cycle control phosphatase"/>
    <property type="match status" value="1"/>
</dbReference>
<dbReference type="PROSITE" id="PS50206">
    <property type="entry name" value="RHODANESE_3"/>
    <property type="match status" value="1"/>
</dbReference>
<organism>
    <name type="scientific">Paraburkholderia phytofirmans (strain DSM 17436 / LMG 22146 / PsJN)</name>
    <name type="common">Burkholderia phytofirmans</name>
    <dbReference type="NCBI Taxonomy" id="398527"/>
    <lineage>
        <taxon>Bacteria</taxon>
        <taxon>Pseudomonadati</taxon>
        <taxon>Pseudomonadota</taxon>
        <taxon>Betaproteobacteria</taxon>
        <taxon>Burkholderiales</taxon>
        <taxon>Burkholderiaceae</taxon>
        <taxon>Paraburkholderia</taxon>
    </lineage>
</organism>
<protein>
    <recommendedName>
        <fullName evidence="1">tRNA uridine(34) hydroxylase</fullName>
        <ecNumber evidence="1">1.14.-.-</ecNumber>
    </recommendedName>
    <alternativeName>
        <fullName evidence="1">tRNA hydroxylation protein O</fullName>
    </alternativeName>
</protein>